<reference key="1">
    <citation type="journal article" date="1999" name="Plant Mol. Biol.">
        <title>The Arabidopsis thaliana RER1 gene family: its potential role in the endoplasmic reticulum localization of membrane proteins.</title>
        <authorList>
            <person name="Sato K."/>
            <person name="Ueda T."/>
            <person name="Nakano A."/>
        </authorList>
    </citation>
    <scope>NUCLEOTIDE SEQUENCE [MRNA]</scope>
    <source>
        <strain>cv. Columbia</strain>
    </source>
</reference>
<reference key="2">
    <citation type="journal article" date="1999" name="Nature">
        <title>Sequence and analysis of chromosome 4 of the plant Arabidopsis thaliana.</title>
        <authorList>
            <person name="Mayer K.F.X."/>
            <person name="Schueller C."/>
            <person name="Wambutt R."/>
            <person name="Murphy G."/>
            <person name="Volckaert G."/>
            <person name="Pohl T."/>
            <person name="Duesterhoeft A."/>
            <person name="Stiekema W."/>
            <person name="Entian K.-D."/>
            <person name="Terryn N."/>
            <person name="Harris B."/>
            <person name="Ansorge W."/>
            <person name="Brandt P."/>
            <person name="Grivell L.A."/>
            <person name="Rieger M."/>
            <person name="Weichselgartner M."/>
            <person name="de Simone V."/>
            <person name="Obermaier B."/>
            <person name="Mache R."/>
            <person name="Mueller M."/>
            <person name="Kreis M."/>
            <person name="Delseny M."/>
            <person name="Puigdomenech P."/>
            <person name="Watson M."/>
            <person name="Schmidtheini T."/>
            <person name="Reichert B."/>
            <person name="Portetelle D."/>
            <person name="Perez-Alonso M."/>
            <person name="Boutry M."/>
            <person name="Bancroft I."/>
            <person name="Vos P."/>
            <person name="Hoheisel J."/>
            <person name="Zimmermann W."/>
            <person name="Wedler H."/>
            <person name="Ridley P."/>
            <person name="Langham S.-A."/>
            <person name="McCullagh B."/>
            <person name="Bilham L."/>
            <person name="Robben J."/>
            <person name="van der Schueren J."/>
            <person name="Grymonprez B."/>
            <person name="Chuang Y.-J."/>
            <person name="Vandenbussche F."/>
            <person name="Braeken M."/>
            <person name="Weltjens I."/>
            <person name="Voet M."/>
            <person name="Bastiaens I."/>
            <person name="Aert R."/>
            <person name="Defoor E."/>
            <person name="Weitzenegger T."/>
            <person name="Bothe G."/>
            <person name="Ramsperger U."/>
            <person name="Hilbert H."/>
            <person name="Braun M."/>
            <person name="Holzer E."/>
            <person name="Brandt A."/>
            <person name="Peters S."/>
            <person name="van Staveren M."/>
            <person name="Dirkse W."/>
            <person name="Mooijman P."/>
            <person name="Klein Lankhorst R."/>
            <person name="Rose M."/>
            <person name="Hauf J."/>
            <person name="Koetter P."/>
            <person name="Berneiser S."/>
            <person name="Hempel S."/>
            <person name="Feldpausch M."/>
            <person name="Lamberth S."/>
            <person name="Van den Daele H."/>
            <person name="De Keyser A."/>
            <person name="Buysshaert C."/>
            <person name="Gielen J."/>
            <person name="Villarroel R."/>
            <person name="De Clercq R."/>
            <person name="van Montagu M."/>
            <person name="Rogers J."/>
            <person name="Cronin A."/>
            <person name="Quail M.A."/>
            <person name="Bray-Allen S."/>
            <person name="Clark L."/>
            <person name="Doggett J."/>
            <person name="Hall S."/>
            <person name="Kay M."/>
            <person name="Lennard N."/>
            <person name="McLay K."/>
            <person name="Mayes R."/>
            <person name="Pettett A."/>
            <person name="Rajandream M.A."/>
            <person name="Lyne M."/>
            <person name="Benes V."/>
            <person name="Rechmann S."/>
            <person name="Borkova D."/>
            <person name="Bloecker H."/>
            <person name="Scharfe M."/>
            <person name="Grimm M."/>
            <person name="Loehnert T.-H."/>
            <person name="Dose S."/>
            <person name="de Haan M."/>
            <person name="Maarse A.C."/>
            <person name="Schaefer M."/>
            <person name="Mueller-Auer S."/>
            <person name="Gabel C."/>
            <person name="Fuchs M."/>
            <person name="Fartmann B."/>
            <person name="Granderath K."/>
            <person name="Dauner D."/>
            <person name="Herzl A."/>
            <person name="Neumann S."/>
            <person name="Argiriou A."/>
            <person name="Vitale D."/>
            <person name="Liguori R."/>
            <person name="Piravandi E."/>
            <person name="Massenet O."/>
            <person name="Quigley F."/>
            <person name="Clabauld G."/>
            <person name="Muendlein A."/>
            <person name="Felber R."/>
            <person name="Schnabl S."/>
            <person name="Hiller R."/>
            <person name="Schmidt W."/>
            <person name="Lecharny A."/>
            <person name="Aubourg S."/>
            <person name="Chefdor F."/>
            <person name="Cooke R."/>
            <person name="Berger C."/>
            <person name="Monfort A."/>
            <person name="Casacuberta E."/>
            <person name="Gibbons T."/>
            <person name="Weber N."/>
            <person name="Vandenbol M."/>
            <person name="Bargues M."/>
            <person name="Terol J."/>
            <person name="Torres A."/>
            <person name="Perez-Perez A."/>
            <person name="Purnelle B."/>
            <person name="Bent E."/>
            <person name="Johnson S."/>
            <person name="Tacon D."/>
            <person name="Jesse T."/>
            <person name="Heijnen L."/>
            <person name="Schwarz S."/>
            <person name="Scholler P."/>
            <person name="Heber S."/>
            <person name="Francs P."/>
            <person name="Bielke C."/>
            <person name="Frishman D."/>
            <person name="Haase D."/>
            <person name="Lemcke K."/>
            <person name="Mewes H.-W."/>
            <person name="Stocker S."/>
            <person name="Zaccaria P."/>
            <person name="Bevan M."/>
            <person name="Wilson R.K."/>
            <person name="de la Bastide M."/>
            <person name="Habermann K."/>
            <person name="Parnell L."/>
            <person name="Dedhia N."/>
            <person name="Gnoj L."/>
            <person name="Schutz K."/>
            <person name="Huang E."/>
            <person name="Spiegel L."/>
            <person name="Sekhon M."/>
            <person name="Murray J."/>
            <person name="Sheet P."/>
            <person name="Cordes M."/>
            <person name="Abu-Threideh J."/>
            <person name="Stoneking T."/>
            <person name="Kalicki J."/>
            <person name="Graves T."/>
            <person name="Harmon G."/>
            <person name="Edwards J."/>
            <person name="Latreille P."/>
            <person name="Courtney L."/>
            <person name="Cloud J."/>
            <person name="Abbott A."/>
            <person name="Scott K."/>
            <person name="Johnson D."/>
            <person name="Minx P."/>
            <person name="Bentley D."/>
            <person name="Fulton B."/>
            <person name="Miller N."/>
            <person name="Greco T."/>
            <person name="Kemp K."/>
            <person name="Kramer J."/>
            <person name="Fulton L."/>
            <person name="Mardis E."/>
            <person name="Dante M."/>
            <person name="Pepin K."/>
            <person name="Hillier L.W."/>
            <person name="Nelson J."/>
            <person name="Spieth J."/>
            <person name="Ryan E."/>
            <person name="Andrews S."/>
            <person name="Geisel C."/>
            <person name="Layman D."/>
            <person name="Du H."/>
            <person name="Ali J."/>
            <person name="Berghoff A."/>
            <person name="Jones K."/>
            <person name="Drone K."/>
            <person name="Cotton M."/>
            <person name="Joshu C."/>
            <person name="Antonoiu B."/>
            <person name="Zidanic M."/>
            <person name="Strong C."/>
            <person name="Sun H."/>
            <person name="Lamar B."/>
            <person name="Yordan C."/>
            <person name="Ma P."/>
            <person name="Zhong J."/>
            <person name="Preston R."/>
            <person name="Vil D."/>
            <person name="Shekher M."/>
            <person name="Matero A."/>
            <person name="Shah R."/>
            <person name="Swaby I.K."/>
            <person name="O'Shaughnessy A."/>
            <person name="Rodriguez M."/>
            <person name="Hoffman J."/>
            <person name="Till S."/>
            <person name="Granat S."/>
            <person name="Shohdy N."/>
            <person name="Hasegawa A."/>
            <person name="Hameed A."/>
            <person name="Lodhi M."/>
            <person name="Johnson A."/>
            <person name="Chen E."/>
            <person name="Marra M.A."/>
            <person name="Martienssen R."/>
            <person name="McCombie W.R."/>
        </authorList>
    </citation>
    <scope>NUCLEOTIDE SEQUENCE [LARGE SCALE GENOMIC DNA]</scope>
    <source>
        <strain>cv. Columbia</strain>
    </source>
</reference>
<reference key="3">
    <citation type="journal article" date="2017" name="Plant J.">
        <title>Araport11: a complete reannotation of the Arabidopsis thaliana reference genome.</title>
        <authorList>
            <person name="Cheng C.Y."/>
            <person name="Krishnakumar V."/>
            <person name="Chan A.P."/>
            <person name="Thibaud-Nissen F."/>
            <person name="Schobel S."/>
            <person name="Town C.D."/>
        </authorList>
    </citation>
    <scope>GENOME REANNOTATION</scope>
    <source>
        <strain>cv. Columbia</strain>
    </source>
</reference>
<reference key="4">
    <citation type="journal article" date="2003" name="Science">
        <title>Empirical analysis of transcriptional activity in the Arabidopsis genome.</title>
        <authorList>
            <person name="Yamada K."/>
            <person name="Lim J."/>
            <person name="Dale J.M."/>
            <person name="Chen H."/>
            <person name="Shinn P."/>
            <person name="Palm C.J."/>
            <person name="Southwick A.M."/>
            <person name="Wu H.C."/>
            <person name="Kim C.J."/>
            <person name="Nguyen M."/>
            <person name="Pham P.K."/>
            <person name="Cheuk R.F."/>
            <person name="Karlin-Newmann G."/>
            <person name="Liu S.X."/>
            <person name="Lam B."/>
            <person name="Sakano H."/>
            <person name="Wu T."/>
            <person name="Yu G."/>
            <person name="Miranda M."/>
            <person name="Quach H.L."/>
            <person name="Tripp M."/>
            <person name="Chang C.H."/>
            <person name="Lee J.M."/>
            <person name="Toriumi M.J."/>
            <person name="Chan M.M."/>
            <person name="Tang C.C."/>
            <person name="Onodera C.S."/>
            <person name="Deng J.M."/>
            <person name="Akiyama K."/>
            <person name="Ansari Y."/>
            <person name="Arakawa T."/>
            <person name="Banh J."/>
            <person name="Banno F."/>
            <person name="Bowser L."/>
            <person name="Brooks S.Y."/>
            <person name="Carninci P."/>
            <person name="Chao Q."/>
            <person name="Choy N."/>
            <person name="Enju A."/>
            <person name="Goldsmith A.D."/>
            <person name="Gurjal M."/>
            <person name="Hansen N.F."/>
            <person name="Hayashizaki Y."/>
            <person name="Johnson-Hopson C."/>
            <person name="Hsuan V.W."/>
            <person name="Iida K."/>
            <person name="Karnes M."/>
            <person name="Khan S."/>
            <person name="Koesema E."/>
            <person name="Ishida J."/>
            <person name="Jiang P.X."/>
            <person name="Jones T."/>
            <person name="Kawai J."/>
            <person name="Kamiya A."/>
            <person name="Meyers C."/>
            <person name="Nakajima M."/>
            <person name="Narusaka M."/>
            <person name="Seki M."/>
            <person name="Sakurai T."/>
            <person name="Satou M."/>
            <person name="Tamse R."/>
            <person name="Vaysberg M."/>
            <person name="Wallender E.K."/>
            <person name="Wong C."/>
            <person name="Yamamura Y."/>
            <person name="Yuan S."/>
            <person name="Shinozaki K."/>
            <person name="Davis R.W."/>
            <person name="Theologis A."/>
            <person name="Ecker J.R."/>
        </authorList>
    </citation>
    <scope>NUCLEOTIDE SEQUENCE [LARGE SCALE MRNA]</scope>
    <source>
        <strain>cv. Columbia</strain>
    </source>
</reference>
<reference key="5">
    <citation type="submission" date="2002-03" db="EMBL/GenBank/DDBJ databases">
        <title>Full-length cDNA from Arabidopsis thaliana.</title>
        <authorList>
            <person name="Brover V.V."/>
            <person name="Troukhan M.E."/>
            <person name="Alexandrov N.A."/>
            <person name="Lu Y.-P."/>
            <person name="Flavell R.B."/>
            <person name="Feldmann K.A."/>
        </authorList>
    </citation>
    <scope>NUCLEOTIDE SEQUENCE [LARGE SCALE MRNA]</scope>
</reference>
<reference key="6">
    <citation type="journal article" date="2012" name="Mol. Cell. Proteomics">
        <title>Comparative large-scale characterisation of plant vs. mammal proteins reveals similar and idiosyncratic N-alpha acetylation features.</title>
        <authorList>
            <person name="Bienvenut W.V."/>
            <person name="Sumpton D."/>
            <person name="Martinez A."/>
            <person name="Lilla S."/>
            <person name="Espagne C."/>
            <person name="Meinnel T."/>
            <person name="Giglione C."/>
        </authorList>
    </citation>
    <scope>ACETYLATION [LARGE SCALE ANALYSIS] AT MET-1</scope>
    <scope>IDENTIFICATION BY MASS SPECTROMETRY [LARGE SCALE ANALYSIS]</scope>
</reference>
<gene>
    <name type="primary">RER1A</name>
    <name type="ordered locus">At4g39220</name>
    <name type="ORF">T22F8.120</name>
</gene>
<sequence length="191" mass="21977">MDESGGDSGSVATPVQQRAHEAWRIYQHYLDKTTPHANYRWIGTLVVALIYCLRVYYIQGFYIIAYGLGIYLLNLLIGFLSPLVDPEAGGVSDGPSLPTRGSDEFKPFIRRLPEFKFWYSMTKAFCIAFLMTFFSVFDVPVFWPILLCYWIVLFVLTMRRQIAHMIKYKYIPFSFGKQKYGGRSSSGSRAD</sequence>
<dbReference type="EMBL" id="AB010945">
    <property type="protein sequence ID" value="BAA24803.1"/>
    <property type="molecule type" value="mRNA"/>
</dbReference>
<dbReference type="EMBL" id="AL050351">
    <property type="protein sequence ID" value="CAB43637.1"/>
    <property type="molecule type" value="Genomic_DNA"/>
</dbReference>
<dbReference type="EMBL" id="AL161594">
    <property type="protein sequence ID" value="CAB80585.1"/>
    <property type="molecule type" value="Genomic_DNA"/>
</dbReference>
<dbReference type="EMBL" id="CP002687">
    <property type="protein sequence ID" value="AEE87039.1"/>
    <property type="molecule type" value="Genomic_DNA"/>
</dbReference>
<dbReference type="EMBL" id="CP002687">
    <property type="protein sequence ID" value="ANM67842.1"/>
    <property type="molecule type" value="Genomic_DNA"/>
</dbReference>
<dbReference type="EMBL" id="AY044321">
    <property type="protein sequence ID" value="AAK73262.1"/>
    <property type="molecule type" value="mRNA"/>
</dbReference>
<dbReference type="EMBL" id="BT000929">
    <property type="protein sequence ID" value="AAN41329.1"/>
    <property type="molecule type" value="mRNA"/>
</dbReference>
<dbReference type="EMBL" id="AY086110">
    <property type="protein sequence ID" value="AAM63317.1"/>
    <property type="molecule type" value="mRNA"/>
</dbReference>
<dbReference type="PIR" id="T08570">
    <property type="entry name" value="T08570"/>
</dbReference>
<dbReference type="RefSeq" id="NP_001329643.1">
    <property type="nucleotide sequence ID" value="NM_001342528.1"/>
</dbReference>
<dbReference type="RefSeq" id="NP_195633.1">
    <property type="nucleotide sequence ID" value="NM_120082.4"/>
</dbReference>
<dbReference type="FunCoup" id="O48670">
    <property type="interactions" value="4551"/>
</dbReference>
<dbReference type="STRING" id="3702.O48670"/>
<dbReference type="TCDB" id="9.B.82.1.3">
    <property type="family name" value="the endoplasmic reticulum retrieval protein1 (putative heavy metal transporter) (rer1) family"/>
</dbReference>
<dbReference type="iPTMnet" id="O48670"/>
<dbReference type="PaxDb" id="3702-AT4G39220.1"/>
<dbReference type="ProteomicsDB" id="235003"/>
<dbReference type="EnsemblPlants" id="AT4G39220.1">
    <property type="protein sequence ID" value="AT4G39220.1"/>
    <property type="gene ID" value="AT4G39220"/>
</dbReference>
<dbReference type="EnsemblPlants" id="AT4G39220.2">
    <property type="protein sequence ID" value="AT4G39220.2"/>
    <property type="gene ID" value="AT4G39220"/>
</dbReference>
<dbReference type="GeneID" id="830077"/>
<dbReference type="Gramene" id="AT4G39220.1">
    <property type="protein sequence ID" value="AT4G39220.1"/>
    <property type="gene ID" value="AT4G39220"/>
</dbReference>
<dbReference type="Gramene" id="AT4G39220.2">
    <property type="protein sequence ID" value="AT4G39220.2"/>
    <property type="gene ID" value="AT4G39220"/>
</dbReference>
<dbReference type="KEGG" id="ath:AT4G39220"/>
<dbReference type="Araport" id="AT4G39220"/>
<dbReference type="TAIR" id="AT4G39220">
    <property type="gene designation" value="ATRER1A"/>
</dbReference>
<dbReference type="eggNOG" id="KOG1688">
    <property type="taxonomic scope" value="Eukaryota"/>
</dbReference>
<dbReference type="HOGENOM" id="CLU_074889_1_1_1"/>
<dbReference type="InParanoid" id="O48670"/>
<dbReference type="OMA" id="QRAHEAW"/>
<dbReference type="OrthoDB" id="448250at2759"/>
<dbReference type="PhylomeDB" id="O48670"/>
<dbReference type="PRO" id="PR:O48670"/>
<dbReference type="Proteomes" id="UP000006548">
    <property type="component" value="Chromosome 4"/>
</dbReference>
<dbReference type="ExpressionAtlas" id="O48670">
    <property type="expression patterns" value="baseline and differential"/>
</dbReference>
<dbReference type="GO" id="GO:0005794">
    <property type="term" value="C:Golgi apparatus"/>
    <property type="evidence" value="ECO:0000314"/>
    <property type="project" value="TAIR"/>
</dbReference>
<dbReference type="GO" id="GO:0016020">
    <property type="term" value="C:membrane"/>
    <property type="evidence" value="ECO:0007669"/>
    <property type="project" value="UniProtKB-SubCell"/>
</dbReference>
<dbReference type="GO" id="GO:0006890">
    <property type="term" value="P:retrograde vesicle-mediated transport, Golgi to endoplasmic reticulum"/>
    <property type="evidence" value="ECO:0000315"/>
    <property type="project" value="TAIR"/>
</dbReference>
<dbReference type="InterPro" id="IPR004932">
    <property type="entry name" value="Rer1"/>
</dbReference>
<dbReference type="PANTHER" id="PTHR10743">
    <property type="entry name" value="PROTEIN RER1"/>
    <property type="match status" value="1"/>
</dbReference>
<dbReference type="PANTHER" id="PTHR10743:SF17">
    <property type="entry name" value="PROTEIN RER1A"/>
    <property type="match status" value="1"/>
</dbReference>
<dbReference type="Pfam" id="PF03248">
    <property type="entry name" value="Rer1"/>
    <property type="match status" value="1"/>
</dbReference>
<dbReference type="PIRSF" id="PIRSF016013">
    <property type="entry name" value="AtER_Rer1p"/>
    <property type="match status" value="1"/>
</dbReference>
<protein>
    <recommendedName>
        <fullName>Protein RER1A</fullName>
        <shortName>AtRER1A</shortName>
    </recommendedName>
</protein>
<proteinExistence type="evidence at protein level"/>
<feature type="chain" id="PRO_0000207594" description="Protein RER1A">
    <location>
        <begin position="1"/>
        <end position="191"/>
    </location>
</feature>
<feature type="transmembrane region" description="Helical" evidence="2">
    <location>
        <begin position="39"/>
        <end position="57"/>
    </location>
</feature>
<feature type="transmembrane region" description="Helical" evidence="2">
    <location>
        <begin position="60"/>
        <end position="80"/>
    </location>
</feature>
<feature type="transmembrane region" description="Helical" evidence="2">
    <location>
        <begin position="115"/>
        <end position="135"/>
    </location>
</feature>
<feature type="transmembrane region" description="Helical" evidence="2">
    <location>
        <begin position="136"/>
        <end position="156"/>
    </location>
</feature>
<feature type="modified residue" description="N-acetylmethionine" evidence="4">
    <location>
        <position position="1"/>
    </location>
</feature>
<accession>O48670</accession>
<evidence type="ECO:0000250" key="1"/>
<evidence type="ECO:0000255" key="2"/>
<evidence type="ECO:0000305" key="3"/>
<evidence type="ECO:0007744" key="4">
    <source>
    </source>
</evidence>
<name>RER1A_ARATH</name>
<comment type="function">
    <text evidence="1">Involved in the retrieval of endoplasmic reticulum membrane proteins from the early Golgi compartment.</text>
</comment>
<comment type="subcellular location">
    <subcellularLocation>
        <location evidence="3">Membrane</location>
        <topology evidence="3">Multi-pass membrane protein</topology>
    </subcellularLocation>
</comment>
<comment type="similarity">
    <text evidence="3">Belongs to the RER1 family.</text>
</comment>
<keyword id="KW-0007">Acetylation</keyword>
<keyword id="KW-0472">Membrane</keyword>
<keyword id="KW-1185">Reference proteome</keyword>
<keyword id="KW-0812">Transmembrane</keyword>
<keyword id="KW-1133">Transmembrane helix</keyword>
<organism>
    <name type="scientific">Arabidopsis thaliana</name>
    <name type="common">Mouse-ear cress</name>
    <dbReference type="NCBI Taxonomy" id="3702"/>
    <lineage>
        <taxon>Eukaryota</taxon>
        <taxon>Viridiplantae</taxon>
        <taxon>Streptophyta</taxon>
        <taxon>Embryophyta</taxon>
        <taxon>Tracheophyta</taxon>
        <taxon>Spermatophyta</taxon>
        <taxon>Magnoliopsida</taxon>
        <taxon>eudicotyledons</taxon>
        <taxon>Gunneridae</taxon>
        <taxon>Pentapetalae</taxon>
        <taxon>rosids</taxon>
        <taxon>malvids</taxon>
        <taxon>Brassicales</taxon>
        <taxon>Brassicaceae</taxon>
        <taxon>Camelineae</taxon>
        <taxon>Arabidopsis</taxon>
    </lineage>
</organism>